<gene>
    <name evidence="1" type="primary">aaeA</name>
    <name type="ordered locus">YE3795</name>
</gene>
<name>AAEA_YERE8</name>
<feature type="chain" id="PRO_0000300558" description="p-hydroxybenzoic acid efflux pump subunit AaeA">
    <location>
        <begin position="1"/>
        <end position="311"/>
    </location>
</feature>
<feature type="transmembrane region" description="Helical" evidence="1">
    <location>
        <begin position="11"/>
        <end position="31"/>
    </location>
</feature>
<protein>
    <recommendedName>
        <fullName evidence="1">p-hydroxybenzoic acid efflux pump subunit AaeA</fullName>
        <shortName evidence="1">pHBA efflux pump protein A</shortName>
    </recommendedName>
</protein>
<reference key="1">
    <citation type="journal article" date="2006" name="PLoS Genet.">
        <title>The complete genome sequence and comparative genome analysis of the high pathogenicity Yersinia enterocolitica strain 8081.</title>
        <authorList>
            <person name="Thomson N.R."/>
            <person name="Howard S."/>
            <person name="Wren B.W."/>
            <person name="Holden M.T.G."/>
            <person name="Crossman L."/>
            <person name="Challis G.L."/>
            <person name="Churcher C."/>
            <person name="Mungall K."/>
            <person name="Brooks K."/>
            <person name="Chillingworth T."/>
            <person name="Feltwell T."/>
            <person name="Abdellah Z."/>
            <person name="Hauser H."/>
            <person name="Jagels K."/>
            <person name="Maddison M."/>
            <person name="Moule S."/>
            <person name="Sanders M."/>
            <person name="Whitehead S."/>
            <person name="Quail M.A."/>
            <person name="Dougan G."/>
            <person name="Parkhill J."/>
            <person name="Prentice M.B."/>
        </authorList>
    </citation>
    <scope>NUCLEOTIDE SEQUENCE [LARGE SCALE GENOMIC DNA]</scope>
    <source>
        <strain>NCTC 13174 / 8081</strain>
    </source>
</reference>
<comment type="function">
    <text evidence="1">Forms an efflux pump with AaeB.</text>
</comment>
<comment type="subcellular location">
    <subcellularLocation>
        <location evidence="1">Cell inner membrane</location>
        <topology evidence="1">Single-pass membrane protein</topology>
    </subcellularLocation>
</comment>
<comment type="similarity">
    <text evidence="1">Belongs to the membrane fusion protein (MFP) (TC 8.A.1) family.</text>
</comment>
<organism>
    <name type="scientific">Yersinia enterocolitica serotype O:8 / biotype 1B (strain NCTC 13174 / 8081)</name>
    <dbReference type="NCBI Taxonomy" id="393305"/>
    <lineage>
        <taxon>Bacteria</taxon>
        <taxon>Pseudomonadati</taxon>
        <taxon>Pseudomonadota</taxon>
        <taxon>Gammaproteobacteria</taxon>
        <taxon>Enterobacterales</taxon>
        <taxon>Yersiniaceae</taxon>
        <taxon>Yersinia</taxon>
    </lineage>
</organism>
<proteinExistence type="inferred from homology"/>
<keyword id="KW-0997">Cell inner membrane</keyword>
<keyword id="KW-1003">Cell membrane</keyword>
<keyword id="KW-0472">Membrane</keyword>
<keyword id="KW-0812">Transmembrane</keyword>
<keyword id="KW-1133">Transmembrane helix</keyword>
<keyword id="KW-0813">Transport</keyword>
<accession>A1JRH9</accession>
<evidence type="ECO:0000255" key="1">
    <source>
        <dbReference type="HAMAP-Rule" id="MF_01544"/>
    </source>
</evidence>
<sequence length="311" mass="34240">MSTFSLKIIRIGITLLVVLLAVIAIFKVWAFYTESPWTRDAKFTADVVAIAPDVSGLITDVPVKDNQLVQKGQILFVIDQPRYQQALAEAEADVAYYQTLAAEKQRESGRRQRLGIQAMSQEEIDQSNNVLQTVRHQLAKAVAVRDLAKLDLERTTVRAPAEGWVTNLNVHAGEFINRGATAVALVKKDTFYILAYLEETKLEGVKPGHRAEITPLGSNRILHGTVDSISAGVTNSSSSADSKGLATIDNNLEWVRLAQRVPVKIRLDSEDQQHSYPAGTTATVVITGSTDRDPNQASPIVKLMHRLREFG</sequence>
<dbReference type="EMBL" id="AM286415">
    <property type="protein sequence ID" value="CAL13819.1"/>
    <property type="molecule type" value="Genomic_DNA"/>
</dbReference>
<dbReference type="RefSeq" id="WP_005174322.1">
    <property type="nucleotide sequence ID" value="NC_008800.1"/>
</dbReference>
<dbReference type="RefSeq" id="YP_001007946.1">
    <property type="nucleotide sequence ID" value="NC_008800.1"/>
</dbReference>
<dbReference type="SMR" id="A1JRH9"/>
<dbReference type="GeneID" id="93970640"/>
<dbReference type="KEGG" id="yen:YE3795"/>
<dbReference type="PATRIC" id="fig|393305.7.peg.4042"/>
<dbReference type="eggNOG" id="COG1566">
    <property type="taxonomic scope" value="Bacteria"/>
</dbReference>
<dbReference type="HOGENOM" id="CLU_018816_15_2_6"/>
<dbReference type="OrthoDB" id="9811754at2"/>
<dbReference type="Proteomes" id="UP000000642">
    <property type="component" value="Chromosome"/>
</dbReference>
<dbReference type="GO" id="GO:0005886">
    <property type="term" value="C:plasma membrane"/>
    <property type="evidence" value="ECO:0007669"/>
    <property type="project" value="UniProtKB-SubCell"/>
</dbReference>
<dbReference type="GO" id="GO:0022857">
    <property type="term" value="F:transmembrane transporter activity"/>
    <property type="evidence" value="ECO:0007669"/>
    <property type="project" value="UniProtKB-UniRule"/>
</dbReference>
<dbReference type="Gene3D" id="2.40.30.170">
    <property type="match status" value="1"/>
</dbReference>
<dbReference type="Gene3D" id="2.40.50.100">
    <property type="match status" value="1"/>
</dbReference>
<dbReference type="HAMAP" id="MF_01544">
    <property type="entry name" value="AaeA"/>
    <property type="match status" value="1"/>
</dbReference>
<dbReference type="InterPro" id="IPR043602">
    <property type="entry name" value="CusB-like_dom_1"/>
</dbReference>
<dbReference type="InterPro" id="IPR032317">
    <property type="entry name" value="CusB_D23"/>
</dbReference>
<dbReference type="InterPro" id="IPR050393">
    <property type="entry name" value="MFP_Efflux_Pump"/>
</dbReference>
<dbReference type="InterPro" id="IPR022871">
    <property type="entry name" value="PHBA_efflux_pump_AaeA"/>
</dbReference>
<dbReference type="InterPro" id="IPR006143">
    <property type="entry name" value="RND_pump_MFP"/>
</dbReference>
<dbReference type="NCBIfam" id="NF007850">
    <property type="entry name" value="PRK10559.1"/>
    <property type="match status" value="1"/>
</dbReference>
<dbReference type="NCBIfam" id="TIGR01730">
    <property type="entry name" value="RND_mfp"/>
    <property type="match status" value="1"/>
</dbReference>
<dbReference type="PANTHER" id="PTHR30367:SF12">
    <property type="entry name" value="P-HYDROXYBENZOIC ACID EFFLUX PUMP SUBUNIT AAEA"/>
    <property type="match status" value="1"/>
</dbReference>
<dbReference type="PANTHER" id="PTHR30367">
    <property type="entry name" value="P-HYDROXYBENZOIC ACID EFFLUX PUMP SUBUNIT AAEA-RELATED"/>
    <property type="match status" value="1"/>
</dbReference>
<dbReference type="Pfam" id="PF00529">
    <property type="entry name" value="CusB_dom_1"/>
    <property type="match status" value="1"/>
</dbReference>
<dbReference type="Pfam" id="PF16576">
    <property type="entry name" value="HlyD_D23"/>
    <property type="match status" value="1"/>
</dbReference>
<dbReference type="SUPFAM" id="SSF111369">
    <property type="entry name" value="HlyD-like secretion proteins"/>
    <property type="match status" value="1"/>
</dbReference>